<comment type="function">
    <text evidence="1 8 11 16 17">U6 snRNP-binding protein that functions as a recycling factor of the splicing machinery. Promotes the initial reassembly of U4 and U6 snRNPs following their ejection from the spliceosome during its maturation (PubMed:12032085). Also binds U6atac snRNPs and may function as a recycling factor for U4atac/U6atac spliceosomal snRNP, an initial step in the assembly of U12-type spliceosomal complex. The U12-type spliceosomal complex plays a role in the splicing of introns with non-canonical splice sites (PubMed:14749385). May also function as a substrate-targeting factor for deubiquitinases like USP4 and USP15. Recruits USP4 to ubiquitinated PRPF3 within the U4/U5/U6 tri-snRNP complex, promoting PRPF3 deubiquitination and thereby regulating the spliceosome U4/U5/U6 tri-snRNP spliceosomal complex disassembly (PubMed:20595234). May also recruit the deubiquitinase USP15 to histone H2B and mediate histone deubiquitination, thereby regulating gene expression and/or DNA repair (PubMed:24526689). May play a role in hematopoiesis probably through transcription regulation of specific genes including MYC (By similarity).</text>
</comment>
<comment type="function">
    <text evidence="7">Regulates Tat transactivation activity through direct interaction. May be a cellular factor for HIV-1 gene expression and viral replication.</text>
</comment>
<comment type="subunit">
    <text evidence="7 12 14 15 16 17">Component of the 7SK snRNP complex at least composed of P-TEFb (composed of CDK9 and CCNT1/cyclin-T1), HEXIM1, HEXIM2, BCDIN3, SART3 proteins and 7SK and U6 snRNAs (PubMed:17643375). Interacts with AGO1 and AGO2 (PubMed:17932509). Interacts with PRPF3 and USP4; the interaction with PRPF3 is direct and recruits USP4 to its substrate PRPF3 (PubMed:15314151, PubMed:20595234). Interacts with USP15; the interaction is direct (PubMed:24526689). Interacts with HIV-1 Tat (PubMed:11959860).</text>
</comment>
<comment type="interaction">
    <interactant intactId="EBI-308619">
        <id>Q15020</id>
    </interactant>
    <interactant intactId="EBI-395959">
        <id>Q15287</id>
        <label>RNPS1</label>
    </interactant>
    <organismsDiffer>false</organismsDiffer>
    <experiments>5</experiments>
</comment>
<comment type="interaction">
    <interactant intactId="EBI-308619">
        <id>Q15020</id>
    </interactant>
    <interactant intactId="EBI-4395669">
        <id>Q6ZNG0</id>
        <label>ZNF620</label>
    </interactant>
    <organismsDiffer>false</organismsDiffer>
    <experiments>3</experiments>
</comment>
<comment type="interaction">
    <interactant intactId="EBI-308619">
        <id>Q15020</id>
    </interactant>
    <interactant intactId="EBI-7138235">
        <id>Q9NQZ8</id>
        <label>ZNF71</label>
    </interactant>
    <organismsDiffer>false</organismsDiffer>
    <experiments>3</experiments>
</comment>
<comment type="interaction">
    <interactant intactId="EBI-308619">
        <id>Q15020</id>
    </interactant>
    <interactant intactId="EBI-14032776">
        <id>F5HFL9</id>
        <label>K4</label>
    </interactant>
    <organismsDiffer>true</organismsDiffer>
    <experiments>2</experiments>
</comment>
<comment type="subcellular location">
    <subcellularLocation>
        <location evidence="6 7 9">Nucleus</location>
        <location evidence="6 7 9">Nucleoplasm</location>
    </subcellularLocation>
    <subcellularLocation>
        <location evidence="9">Nucleus</location>
        <location evidence="9">Cajal body</location>
    </subcellularLocation>
    <subcellularLocation>
        <location evidence="7">Nucleus speckle</location>
    </subcellularLocation>
    <subcellularLocation>
        <location evidence="6 7">Cytoplasm</location>
    </subcellularLocation>
</comment>
<comment type="alternative products">
    <event type="alternative splicing"/>
    <isoform>
        <id>Q15020-1</id>
        <name>1</name>
        <sequence type="displayed"/>
    </isoform>
    <isoform>
        <id>Q15020-2</id>
        <name>2</name>
        <sequence type="described" ref="VSP_017250 VSP_017251"/>
    </isoform>
    <isoform>
        <id>Q15020-3</id>
        <name>3</name>
        <sequence type="described" ref="VSP_017248 VSP_017249"/>
    </isoform>
    <isoform>
        <id>Q15020-4</id>
        <name>4</name>
        <sequence type="described" ref="VSP_057284"/>
    </isoform>
</comment>
<comment type="tissue specificity">
    <text evidence="7">Ubiquitously expressed.</text>
</comment>
<comment type="miscellaneous">
    <molecule>Isoform 2</molecule>
    <text evidence="12">May be produced at very low levels due to a premature stop codon in the mRNA, leading to nonsense-mediated mRNA decay. Inactive in U4/U6 snRNP recycling.</text>
</comment>
<protein>
    <recommendedName>
        <fullName evidence="25">Spliceosome associated factor 3, U4/U6 recycling protein</fullName>
    </recommendedName>
    <alternativeName>
        <fullName evidence="22">Squamous cell carcinoma antigen recognized by T-cells 3</fullName>
        <shortName evidence="24">SART-3</shortName>
    </alternativeName>
    <alternativeName>
        <fullName evidence="19">Tat-interacting protein of 110 kDa</fullName>
        <shortName evidence="19">Tip110</shortName>
    </alternativeName>
    <alternativeName>
        <fullName evidence="20">p110 nuclear RNA-binding protein</fullName>
    </alternativeName>
</protein>
<organism>
    <name type="scientific">Homo sapiens</name>
    <name type="common">Human</name>
    <dbReference type="NCBI Taxonomy" id="9606"/>
    <lineage>
        <taxon>Eukaryota</taxon>
        <taxon>Metazoa</taxon>
        <taxon>Chordata</taxon>
        <taxon>Craniata</taxon>
        <taxon>Vertebrata</taxon>
        <taxon>Euteleostomi</taxon>
        <taxon>Mammalia</taxon>
        <taxon>Eutheria</taxon>
        <taxon>Euarchontoglires</taxon>
        <taxon>Primates</taxon>
        <taxon>Haplorrhini</taxon>
        <taxon>Catarrhini</taxon>
        <taxon>Hominidae</taxon>
        <taxon>Homo</taxon>
    </lineage>
</organism>
<keyword id="KW-0002">3D-structure</keyword>
<keyword id="KW-0007">Acetylation</keyword>
<keyword id="KW-0025">Alternative splicing</keyword>
<keyword id="KW-0175">Coiled coil</keyword>
<keyword id="KW-0963">Cytoplasm</keyword>
<keyword id="KW-0903">Direct protein sequencing</keyword>
<keyword id="KW-0488">Methylation</keyword>
<keyword id="KW-0507">mRNA processing</keyword>
<keyword id="KW-0508">mRNA splicing</keyword>
<keyword id="KW-0539">Nucleus</keyword>
<keyword id="KW-0597">Phosphoprotein</keyword>
<keyword id="KW-1267">Proteomics identification</keyword>
<keyword id="KW-1185">Reference proteome</keyword>
<keyword id="KW-0677">Repeat</keyword>
<keyword id="KW-0694">RNA-binding</keyword>
<reference key="1">
    <citation type="journal article" date="1999" name="Cancer Res.">
        <title>Identification of a gene coding for a protein possessing shared tumor epitopes capable of inducing HLA-A24-restricted cytotoxic T lymphocytes in cancer patients.</title>
        <authorList>
            <person name="Yang D."/>
            <person name="Nakao M."/>
            <person name="Shichijo S."/>
            <person name="Sasatomi T."/>
            <person name="Takasu H."/>
            <person name="Matsumoto H."/>
            <person name="Mori K."/>
            <person name="Hayashi A."/>
            <person name="Yamana H."/>
            <person name="Shirouzu K."/>
            <person name="Itoh K."/>
        </authorList>
    </citation>
    <scope>NUCLEOTIDE SEQUENCE [MRNA] (ISOFORM 1)</scope>
    <scope>SUBCELLULAR LOCATION</scope>
</reference>
<reference key="2">
    <citation type="journal article" date="2002" name="J. Biol. Chem.">
        <title>HIV-1 Tat protein-mediated transactivation of the HIV-1 long terminal repeat promoter is potentiated by a novel nuclear Tat-interacting protein of 110 kDa, Tip110.</title>
        <authorList>
            <person name="Liu Y."/>
            <person name="Li J."/>
            <person name="Kim B.O."/>
            <person name="Pace B.S."/>
            <person name="He J.J."/>
        </authorList>
    </citation>
    <scope>NUCLEOTIDE SEQUENCE [MRNA] (ISOFORM 2)</scope>
    <scope>TISSUE SPECIFICITY</scope>
    <scope>SUBCELLULAR LOCATION</scope>
    <scope>FUNCTION</scope>
    <scope>INTERACTION WITH TAT</scope>
    <scope>REGION</scope>
    <source>
        <tissue>Fetal brain</tissue>
    </source>
</reference>
<reference key="3">
    <citation type="journal article" date="1995" name="DNA Res.">
        <title>Prediction of the coding sequences of unidentified human genes. IV. The coding sequences of 40 new genes (KIAA0121-KIAA0160) deduced by analysis of cDNA clones from human cell line KG-1.</title>
        <authorList>
            <person name="Nagase T."/>
            <person name="Seki N."/>
            <person name="Tanaka A."/>
            <person name="Ishikawa K."/>
            <person name="Nomura N."/>
        </authorList>
    </citation>
    <scope>NUCLEOTIDE SEQUENCE [LARGE SCALE MRNA] (ISOFORM 1)</scope>
    <source>
        <tissue>Bone marrow</tissue>
    </source>
</reference>
<reference key="4">
    <citation type="journal article" date="2004" name="Nat. Genet.">
        <title>Complete sequencing and characterization of 21,243 full-length human cDNAs.</title>
        <authorList>
            <person name="Ota T."/>
            <person name="Suzuki Y."/>
            <person name="Nishikawa T."/>
            <person name="Otsuki T."/>
            <person name="Sugiyama T."/>
            <person name="Irie R."/>
            <person name="Wakamatsu A."/>
            <person name="Hayashi K."/>
            <person name="Sato H."/>
            <person name="Nagai K."/>
            <person name="Kimura K."/>
            <person name="Makita H."/>
            <person name="Sekine M."/>
            <person name="Obayashi M."/>
            <person name="Nishi T."/>
            <person name="Shibahara T."/>
            <person name="Tanaka T."/>
            <person name="Ishii S."/>
            <person name="Yamamoto J."/>
            <person name="Saito K."/>
            <person name="Kawai Y."/>
            <person name="Isono Y."/>
            <person name="Nakamura Y."/>
            <person name="Nagahari K."/>
            <person name="Murakami K."/>
            <person name="Yasuda T."/>
            <person name="Iwayanagi T."/>
            <person name="Wagatsuma M."/>
            <person name="Shiratori A."/>
            <person name="Sudo H."/>
            <person name="Hosoiri T."/>
            <person name="Kaku Y."/>
            <person name="Kodaira H."/>
            <person name="Kondo H."/>
            <person name="Sugawara M."/>
            <person name="Takahashi M."/>
            <person name="Kanda K."/>
            <person name="Yokoi T."/>
            <person name="Furuya T."/>
            <person name="Kikkawa E."/>
            <person name="Omura Y."/>
            <person name="Abe K."/>
            <person name="Kamihara K."/>
            <person name="Katsuta N."/>
            <person name="Sato K."/>
            <person name="Tanikawa M."/>
            <person name="Yamazaki M."/>
            <person name="Ninomiya K."/>
            <person name="Ishibashi T."/>
            <person name="Yamashita H."/>
            <person name="Murakawa K."/>
            <person name="Fujimori K."/>
            <person name="Tanai H."/>
            <person name="Kimata M."/>
            <person name="Watanabe M."/>
            <person name="Hiraoka S."/>
            <person name="Chiba Y."/>
            <person name="Ishida S."/>
            <person name="Ono Y."/>
            <person name="Takiguchi S."/>
            <person name="Watanabe S."/>
            <person name="Yosida M."/>
            <person name="Hotuta T."/>
            <person name="Kusano J."/>
            <person name="Kanehori K."/>
            <person name="Takahashi-Fujii A."/>
            <person name="Hara H."/>
            <person name="Tanase T.-O."/>
            <person name="Nomura Y."/>
            <person name="Togiya S."/>
            <person name="Komai F."/>
            <person name="Hara R."/>
            <person name="Takeuchi K."/>
            <person name="Arita M."/>
            <person name="Imose N."/>
            <person name="Musashino K."/>
            <person name="Yuuki H."/>
            <person name="Oshima A."/>
            <person name="Sasaki N."/>
            <person name="Aotsuka S."/>
            <person name="Yoshikawa Y."/>
            <person name="Matsunawa H."/>
            <person name="Ichihara T."/>
            <person name="Shiohata N."/>
            <person name="Sano S."/>
            <person name="Moriya S."/>
            <person name="Momiyama H."/>
            <person name="Satoh N."/>
            <person name="Takami S."/>
            <person name="Terashima Y."/>
            <person name="Suzuki O."/>
            <person name="Nakagawa S."/>
            <person name="Senoh A."/>
            <person name="Mizoguchi H."/>
            <person name="Goto Y."/>
            <person name="Shimizu F."/>
            <person name="Wakebe H."/>
            <person name="Hishigaki H."/>
            <person name="Watanabe T."/>
            <person name="Sugiyama A."/>
            <person name="Takemoto M."/>
            <person name="Kawakami B."/>
            <person name="Yamazaki M."/>
            <person name="Watanabe K."/>
            <person name="Kumagai A."/>
            <person name="Itakura S."/>
            <person name="Fukuzumi Y."/>
            <person name="Fujimori Y."/>
            <person name="Komiyama M."/>
            <person name="Tashiro H."/>
            <person name="Tanigami A."/>
            <person name="Fujiwara T."/>
            <person name="Ono T."/>
            <person name="Yamada K."/>
            <person name="Fujii Y."/>
            <person name="Ozaki K."/>
            <person name="Hirao M."/>
            <person name="Ohmori Y."/>
            <person name="Kawabata A."/>
            <person name="Hikiji T."/>
            <person name="Kobatake N."/>
            <person name="Inagaki H."/>
            <person name="Ikema Y."/>
            <person name="Okamoto S."/>
            <person name="Okitani R."/>
            <person name="Kawakami T."/>
            <person name="Noguchi S."/>
            <person name="Itoh T."/>
            <person name="Shigeta K."/>
            <person name="Senba T."/>
            <person name="Matsumura K."/>
            <person name="Nakajima Y."/>
            <person name="Mizuno T."/>
            <person name="Morinaga M."/>
            <person name="Sasaki M."/>
            <person name="Togashi T."/>
            <person name="Oyama M."/>
            <person name="Hata H."/>
            <person name="Watanabe M."/>
            <person name="Komatsu T."/>
            <person name="Mizushima-Sugano J."/>
            <person name="Satoh T."/>
            <person name="Shirai Y."/>
            <person name="Takahashi Y."/>
            <person name="Nakagawa K."/>
            <person name="Okumura K."/>
            <person name="Nagase T."/>
            <person name="Nomura N."/>
            <person name="Kikuchi H."/>
            <person name="Masuho Y."/>
            <person name="Yamashita R."/>
            <person name="Nakai K."/>
            <person name="Yada T."/>
            <person name="Nakamura Y."/>
            <person name="Ohara O."/>
            <person name="Isogai T."/>
            <person name="Sugano S."/>
        </authorList>
    </citation>
    <scope>NUCLEOTIDE SEQUENCE [LARGE SCALE MRNA] (ISOFORM 1)</scope>
    <scope>VARIANT GLU-23</scope>
    <source>
        <tissue>Thalamus</tissue>
    </source>
</reference>
<reference key="5">
    <citation type="journal article" date="2006" name="Nature">
        <title>The finished DNA sequence of human chromosome 12.</title>
        <authorList>
            <person name="Scherer S.E."/>
            <person name="Muzny D.M."/>
            <person name="Buhay C.J."/>
            <person name="Chen R."/>
            <person name="Cree A."/>
            <person name="Ding Y."/>
            <person name="Dugan-Rocha S."/>
            <person name="Gill R."/>
            <person name="Gunaratne P."/>
            <person name="Harris R.A."/>
            <person name="Hawes A.C."/>
            <person name="Hernandez J."/>
            <person name="Hodgson A.V."/>
            <person name="Hume J."/>
            <person name="Jackson A."/>
            <person name="Khan Z.M."/>
            <person name="Kovar-Smith C."/>
            <person name="Lewis L.R."/>
            <person name="Lozado R.J."/>
            <person name="Metzker M.L."/>
            <person name="Milosavljevic A."/>
            <person name="Miner G.R."/>
            <person name="Montgomery K.T."/>
            <person name="Morgan M.B."/>
            <person name="Nazareth L.V."/>
            <person name="Scott G."/>
            <person name="Sodergren E."/>
            <person name="Song X.-Z."/>
            <person name="Steffen D."/>
            <person name="Lovering R.C."/>
            <person name="Wheeler D.A."/>
            <person name="Worley K.C."/>
            <person name="Yuan Y."/>
            <person name="Zhang Z."/>
            <person name="Adams C.Q."/>
            <person name="Ansari-Lari M.A."/>
            <person name="Ayele M."/>
            <person name="Brown M.J."/>
            <person name="Chen G."/>
            <person name="Chen Z."/>
            <person name="Clerc-Blankenburg K.P."/>
            <person name="Davis C."/>
            <person name="Delgado O."/>
            <person name="Dinh H.H."/>
            <person name="Draper H."/>
            <person name="Gonzalez-Garay M.L."/>
            <person name="Havlak P."/>
            <person name="Jackson L.R."/>
            <person name="Jacob L.S."/>
            <person name="Kelly S.H."/>
            <person name="Li L."/>
            <person name="Li Z."/>
            <person name="Liu J."/>
            <person name="Liu W."/>
            <person name="Lu J."/>
            <person name="Maheshwari M."/>
            <person name="Nguyen B.-V."/>
            <person name="Okwuonu G.O."/>
            <person name="Pasternak S."/>
            <person name="Perez L.M."/>
            <person name="Plopper F.J.H."/>
            <person name="Santibanez J."/>
            <person name="Shen H."/>
            <person name="Tabor P.E."/>
            <person name="Verduzco D."/>
            <person name="Waldron L."/>
            <person name="Wang Q."/>
            <person name="Williams G.A."/>
            <person name="Zhang J."/>
            <person name="Zhou J."/>
            <person name="Allen C.C."/>
            <person name="Amin A.G."/>
            <person name="Anyalebechi V."/>
            <person name="Bailey M."/>
            <person name="Barbaria J.A."/>
            <person name="Bimage K.E."/>
            <person name="Bryant N.P."/>
            <person name="Burch P.E."/>
            <person name="Burkett C.E."/>
            <person name="Burrell K.L."/>
            <person name="Calderon E."/>
            <person name="Cardenas V."/>
            <person name="Carter K."/>
            <person name="Casias K."/>
            <person name="Cavazos I."/>
            <person name="Cavazos S.R."/>
            <person name="Ceasar H."/>
            <person name="Chacko J."/>
            <person name="Chan S.N."/>
            <person name="Chavez D."/>
            <person name="Christopoulos C."/>
            <person name="Chu J."/>
            <person name="Cockrell R."/>
            <person name="Cox C.D."/>
            <person name="Dang M."/>
            <person name="Dathorne S.R."/>
            <person name="David R."/>
            <person name="Davis C.M."/>
            <person name="Davy-Carroll L."/>
            <person name="Deshazo D.R."/>
            <person name="Donlin J.E."/>
            <person name="D'Souza L."/>
            <person name="Eaves K.A."/>
            <person name="Egan A."/>
            <person name="Emery-Cohen A.J."/>
            <person name="Escotto M."/>
            <person name="Flagg N."/>
            <person name="Forbes L.D."/>
            <person name="Gabisi A.M."/>
            <person name="Garza M."/>
            <person name="Hamilton C."/>
            <person name="Henderson N."/>
            <person name="Hernandez O."/>
            <person name="Hines S."/>
            <person name="Hogues M.E."/>
            <person name="Huang M."/>
            <person name="Idlebird D.G."/>
            <person name="Johnson R."/>
            <person name="Jolivet A."/>
            <person name="Jones S."/>
            <person name="Kagan R."/>
            <person name="King L.M."/>
            <person name="Leal B."/>
            <person name="Lebow H."/>
            <person name="Lee S."/>
            <person name="LeVan J.M."/>
            <person name="Lewis L.C."/>
            <person name="London P."/>
            <person name="Lorensuhewa L.M."/>
            <person name="Loulseged H."/>
            <person name="Lovett D.A."/>
            <person name="Lucier A."/>
            <person name="Lucier R.L."/>
            <person name="Ma J."/>
            <person name="Madu R.C."/>
            <person name="Mapua P."/>
            <person name="Martindale A.D."/>
            <person name="Martinez E."/>
            <person name="Massey E."/>
            <person name="Mawhiney S."/>
            <person name="Meador M.G."/>
            <person name="Mendez S."/>
            <person name="Mercado C."/>
            <person name="Mercado I.C."/>
            <person name="Merritt C.E."/>
            <person name="Miner Z.L."/>
            <person name="Minja E."/>
            <person name="Mitchell T."/>
            <person name="Mohabbat F."/>
            <person name="Mohabbat K."/>
            <person name="Montgomery B."/>
            <person name="Moore N."/>
            <person name="Morris S."/>
            <person name="Munidasa M."/>
            <person name="Ngo R.N."/>
            <person name="Nguyen N.B."/>
            <person name="Nickerson E."/>
            <person name="Nwaokelemeh O.O."/>
            <person name="Nwokenkwo S."/>
            <person name="Obregon M."/>
            <person name="Oguh M."/>
            <person name="Oragunye N."/>
            <person name="Oviedo R.J."/>
            <person name="Parish B.J."/>
            <person name="Parker D.N."/>
            <person name="Parrish J."/>
            <person name="Parks K.L."/>
            <person name="Paul H.A."/>
            <person name="Payton B.A."/>
            <person name="Perez A."/>
            <person name="Perrin W."/>
            <person name="Pickens A."/>
            <person name="Primus E.L."/>
            <person name="Pu L.-L."/>
            <person name="Puazo M."/>
            <person name="Quiles M.M."/>
            <person name="Quiroz J.B."/>
            <person name="Rabata D."/>
            <person name="Reeves K."/>
            <person name="Ruiz S.J."/>
            <person name="Shao H."/>
            <person name="Sisson I."/>
            <person name="Sonaike T."/>
            <person name="Sorelle R.P."/>
            <person name="Sutton A.E."/>
            <person name="Svatek A.F."/>
            <person name="Svetz L.A."/>
            <person name="Tamerisa K.S."/>
            <person name="Taylor T.R."/>
            <person name="Teague B."/>
            <person name="Thomas N."/>
            <person name="Thorn R.D."/>
            <person name="Trejos Z.Y."/>
            <person name="Trevino B.K."/>
            <person name="Ukegbu O.N."/>
            <person name="Urban J.B."/>
            <person name="Vasquez L.I."/>
            <person name="Vera V.A."/>
            <person name="Villasana D.M."/>
            <person name="Wang L."/>
            <person name="Ward-Moore S."/>
            <person name="Warren J.T."/>
            <person name="Wei X."/>
            <person name="White F."/>
            <person name="Williamson A.L."/>
            <person name="Wleczyk R."/>
            <person name="Wooden H.S."/>
            <person name="Wooden S.H."/>
            <person name="Yen J."/>
            <person name="Yoon L."/>
            <person name="Yoon V."/>
            <person name="Zorrilla S.E."/>
            <person name="Nelson D."/>
            <person name="Kucherlapati R."/>
            <person name="Weinstock G."/>
            <person name="Gibbs R.A."/>
        </authorList>
    </citation>
    <scope>NUCLEOTIDE SEQUENCE [LARGE SCALE GENOMIC DNA]</scope>
</reference>
<reference key="6">
    <citation type="journal article" date="2004" name="Genome Res.">
        <title>The status, quality, and expansion of the NIH full-length cDNA project: the Mammalian Gene Collection (MGC).</title>
        <authorList>
            <consortium name="The MGC Project Team"/>
        </authorList>
    </citation>
    <scope>NUCLEOTIDE SEQUENCE [LARGE SCALE MRNA] (ISOFORMS 1; 3 AND 4)</scope>
    <source>
        <tissue>Brain</tissue>
        <tissue>Eye</tissue>
        <tissue>Skin</tissue>
        <tissue>Uterus</tissue>
    </source>
</reference>
<reference key="7">
    <citation type="journal article" date="2002" name="EMBO J.">
        <title>p110, a novel human U6 snRNP protein and U4/U6 snRNP recycling factor.</title>
        <authorList>
            <person name="Bell M."/>
            <person name="Schreiner S."/>
            <person name="Damianov A."/>
            <person name="Reddy R."/>
            <person name="Bindereif A."/>
        </authorList>
    </citation>
    <scope>FUNCTION</scope>
</reference>
<reference key="8">
    <citation type="journal article" date="2003" name="J. Cell Biol.">
        <title>Targeting of U4/U6 small nuclear RNP assembly factor SART3/p110 to Cajal bodies.</title>
        <authorList>
            <person name="Stanek D."/>
            <person name="Rader S.D."/>
            <person name="Klingauf M."/>
            <person name="Neugebauer K.M."/>
        </authorList>
    </citation>
    <scope>SUBCELLULAR LOCATION</scope>
</reference>
<reference key="9">
    <citation type="journal article" date="2004" name="Mol. Cell. Biol.">
        <title>Recycling of the U12-type spliceosome requires p110, a component of the U6atac snRNP.</title>
        <authorList>
            <person name="Damianov A."/>
            <person name="Schreiner S."/>
            <person name="Bindereif A."/>
        </authorList>
    </citation>
    <scope>FUNCTION</scope>
</reference>
<reference key="10">
    <citation type="journal article" date="2004" name="Mol. Cell. Biol.">
        <title>Human U4/U6 snRNP recycling factor p110: mutational analysis reveals the function of the tetratricopeptide repeat domain in recycling.</title>
        <authorList>
            <person name="Medenbach J."/>
            <person name="Schreiner S."/>
            <person name="Liu S."/>
            <person name="Luhrmann R."/>
            <person name="Bindereif A."/>
        </authorList>
    </citation>
    <scope>FUNCTION (ISOFORM 2)</scope>
    <scope>INTERACTION WITH PRPF3</scope>
    <scope>REGION</scope>
</reference>
<reference key="11">
    <citation type="journal article" date="2006" name="Cell">
        <title>Global, in vivo, and site-specific phosphorylation dynamics in signaling networks.</title>
        <authorList>
            <person name="Olsen J.V."/>
            <person name="Blagoev B."/>
            <person name="Gnad F."/>
            <person name="Macek B."/>
            <person name="Kumar C."/>
            <person name="Mortensen P."/>
            <person name="Mann M."/>
        </authorList>
    </citation>
    <scope>PHOSPHORYLATION [LARGE SCALE ANALYSIS] AT SER-16</scope>
    <scope>IDENTIFICATION BY MASS SPECTROMETRY [LARGE SCALE ANALYSIS]</scope>
    <source>
        <tissue>Cervix carcinoma</tissue>
    </source>
</reference>
<reference key="12">
    <citation type="journal article" date="2007" name="EMBO Rep.">
        <title>Proteomic and functional analysis of Argonaute-containing mRNA-protein complexes in human cells.</title>
        <authorList>
            <person name="Hoeck J."/>
            <person name="Weinmann L."/>
            <person name="Ender C."/>
            <person name="Ruedel S."/>
            <person name="Kremmer E."/>
            <person name="Raabe M."/>
            <person name="Urlaub H."/>
            <person name="Meister G."/>
        </authorList>
    </citation>
    <scope>INTERACTION WITH AGO1 AND AGO2</scope>
</reference>
<reference key="13">
    <citation type="submission" date="2008-02" db="UniProtKB">
        <authorList>
            <person name="Bienvenut W.V."/>
            <person name="Dhillon A.S."/>
            <person name="Kolch W."/>
        </authorList>
    </citation>
    <scope>PROTEIN SEQUENCE OF 2-17; 121-130; 233-243; 295-322; 329-335; 350-356; 360-370; 452-463; 494-502; 555-568; 646-669; 758-768 AND 911-918</scope>
    <scope>CLEAVAGE OF INITIATOR METHIONINE</scope>
    <scope>ACETYLATION AT ALA-2</scope>
    <scope>IDENTIFICATION BY MASS SPECTROMETRY</scope>
    <source>
        <tissue>Hepatoma</tissue>
    </source>
</reference>
<reference key="14">
    <citation type="journal article" date="2007" name="Mol. Cell">
        <title>Systematic analysis of the protein interaction network for the human transcription machinery reveals the identity of the 7SK capping enzyme.</title>
        <authorList>
            <person name="Jeronimo C."/>
            <person name="Forget D."/>
            <person name="Bouchard A."/>
            <person name="Li Q."/>
            <person name="Chua G."/>
            <person name="Poitras C."/>
            <person name="Therien C."/>
            <person name="Bergeron D."/>
            <person name="Bourassa S."/>
            <person name="Greenblatt J."/>
            <person name="Chabot B."/>
            <person name="Poirier G.G."/>
            <person name="Hughes T.R."/>
            <person name="Blanchette M."/>
            <person name="Price D.H."/>
            <person name="Coulombe B."/>
        </authorList>
    </citation>
    <scope>IDENTIFICATION IN THE 7SK SNRNP COMPLEX</scope>
</reference>
<reference key="15">
    <citation type="journal article" date="2007" name="Science">
        <title>ATM and ATR substrate analysis reveals extensive protein networks responsive to DNA damage.</title>
        <authorList>
            <person name="Matsuoka S."/>
            <person name="Ballif B.A."/>
            <person name="Smogorzewska A."/>
            <person name="McDonald E.R. III"/>
            <person name="Hurov K.E."/>
            <person name="Luo J."/>
            <person name="Bakalarski C.E."/>
            <person name="Zhao Z."/>
            <person name="Solimini N."/>
            <person name="Lerenthal Y."/>
            <person name="Shiloh Y."/>
            <person name="Gygi S.P."/>
            <person name="Elledge S.J."/>
        </authorList>
    </citation>
    <scope>PHOSPHORYLATION [LARGE SCALE ANALYSIS] AT SER-852</scope>
    <scope>IDENTIFICATION BY MASS SPECTROMETRY [LARGE SCALE ANALYSIS]</scope>
    <source>
        <tissue>Embryonic kidney</tissue>
    </source>
</reference>
<reference key="16">
    <citation type="journal article" date="2009" name="Anal. Chem.">
        <title>Lys-N and trypsin cover complementary parts of the phosphoproteome in a refined SCX-based approach.</title>
        <authorList>
            <person name="Gauci S."/>
            <person name="Helbig A.O."/>
            <person name="Slijper M."/>
            <person name="Krijgsveld J."/>
            <person name="Heck A.J."/>
            <person name="Mohammed S."/>
        </authorList>
    </citation>
    <scope>ACETYLATION [LARGE SCALE ANALYSIS] AT ALA-2</scope>
    <scope>CLEAVAGE OF INITIATOR METHIONINE [LARGE SCALE ANALYSIS]</scope>
    <scope>IDENTIFICATION BY MASS SPECTROMETRY [LARGE SCALE ANALYSIS]</scope>
</reference>
<reference key="17">
    <citation type="journal article" date="2009" name="Mol. Cell. Proteomics">
        <title>Large-scale proteomics analysis of the human kinome.</title>
        <authorList>
            <person name="Oppermann F.S."/>
            <person name="Gnad F."/>
            <person name="Olsen J.V."/>
            <person name="Hornberger R."/>
            <person name="Greff Z."/>
            <person name="Keri G."/>
            <person name="Mann M."/>
            <person name="Daub H."/>
        </authorList>
    </citation>
    <scope>ACETYLATION [LARGE SCALE ANALYSIS] AT ALA-2</scope>
    <scope>CLEAVAGE OF INITIATOR METHIONINE [LARGE SCALE ANALYSIS]</scope>
    <scope>IDENTIFICATION BY MASS SPECTROMETRY [LARGE SCALE ANALYSIS]</scope>
</reference>
<reference key="18">
    <citation type="journal article" date="2010" name="Genes Dev.">
        <title>The Prp19 complex and the Usp4Sart3 deubiquitinating enzyme control reversible ubiquitination at the spliceosome.</title>
        <authorList>
            <person name="Song E.J."/>
            <person name="Werner S.L."/>
            <person name="Neubauer J."/>
            <person name="Stegmeier F."/>
            <person name="Aspden J."/>
            <person name="Rio D."/>
            <person name="Harper J.W."/>
            <person name="Elledge S.J."/>
            <person name="Kirschner M.W."/>
            <person name="Rape M."/>
        </authorList>
    </citation>
    <scope>FUNCTION</scope>
    <scope>INTERACTION WITH PRPF3 AND USP4</scope>
    <scope>REGION</scope>
</reference>
<reference key="19">
    <citation type="journal article" date="2010" name="Sci. Signal.">
        <title>Quantitative phosphoproteomics reveals widespread full phosphorylation site occupancy during mitosis.</title>
        <authorList>
            <person name="Olsen J.V."/>
            <person name="Vermeulen M."/>
            <person name="Santamaria A."/>
            <person name="Kumar C."/>
            <person name="Miller M.L."/>
            <person name="Jensen L.J."/>
            <person name="Gnad F."/>
            <person name="Cox J."/>
            <person name="Jensen T.S."/>
            <person name="Nigg E.A."/>
            <person name="Brunak S."/>
            <person name="Mann M."/>
        </authorList>
    </citation>
    <scope>ACETYLATION [LARGE SCALE ANALYSIS] AT ALA-2</scope>
    <scope>CLEAVAGE OF INITIATOR METHIONINE [LARGE SCALE ANALYSIS]</scope>
    <scope>IDENTIFICATION BY MASS SPECTROMETRY [LARGE SCALE ANALYSIS]</scope>
    <source>
        <tissue>Cervix carcinoma</tissue>
    </source>
</reference>
<reference key="20">
    <citation type="journal article" date="2011" name="BMC Syst. Biol.">
        <title>Initial characterization of the human central proteome.</title>
        <authorList>
            <person name="Burkard T.R."/>
            <person name="Planyavsky M."/>
            <person name="Kaupe I."/>
            <person name="Breitwieser F.P."/>
            <person name="Buerckstuemmer T."/>
            <person name="Bennett K.L."/>
            <person name="Superti-Furga G."/>
            <person name="Colinge J."/>
        </authorList>
    </citation>
    <scope>IDENTIFICATION BY MASS SPECTROMETRY [LARGE SCALE ANALYSIS]</scope>
</reference>
<reference key="21">
    <citation type="journal article" date="2011" name="Sci. Signal.">
        <title>System-wide temporal characterization of the proteome and phosphoproteome of human embryonic stem cell differentiation.</title>
        <authorList>
            <person name="Rigbolt K.T."/>
            <person name="Prokhorova T.A."/>
            <person name="Akimov V."/>
            <person name="Henningsen J."/>
            <person name="Johansen P.T."/>
            <person name="Kratchmarova I."/>
            <person name="Kassem M."/>
            <person name="Mann M."/>
            <person name="Olsen J.V."/>
            <person name="Blagoev B."/>
        </authorList>
    </citation>
    <scope>ACETYLATION [LARGE SCALE ANALYSIS] AT ALA-2</scope>
    <scope>PHOSPHORYLATION [LARGE SCALE ANALYSIS] AT SER-10</scope>
    <scope>CLEAVAGE OF INITIATOR METHIONINE [LARGE SCALE ANALYSIS]</scope>
    <scope>IDENTIFICATION BY MASS SPECTROMETRY [LARGE SCALE ANALYSIS]</scope>
</reference>
<reference key="22">
    <citation type="journal article" date="2012" name="Mol. Cell. Proteomics">
        <title>Comparative large-scale characterisation of plant vs. mammal proteins reveals similar and idiosyncratic N-alpha acetylation features.</title>
        <authorList>
            <person name="Bienvenut W.V."/>
            <person name="Sumpton D."/>
            <person name="Martinez A."/>
            <person name="Lilla S."/>
            <person name="Espagne C."/>
            <person name="Meinnel T."/>
            <person name="Giglione C."/>
        </authorList>
    </citation>
    <scope>ACETYLATION [LARGE SCALE ANALYSIS] AT ALA-2</scope>
    <scope>CLEAVAGE OF INITIATOR METHIONINE [LARGE SCALE ANALYSIS]</scope>
    <scope>IDENTIFICATION BY MASS SPECTROMETRY [LARGE SCALE ANALYSIS]</scope>
</reference>
<reference key="23">
    <citation type="journal article" date="2012" name="Proc. Natl. Acad. Sci. U.S.A.">
        <title>N-terminal acetylome analyses and functional insights of the N-terminal acetyltransferase NatB.</title>
        <authorList>
            <person name="Van Damme P."/>
            <person name="Lasa M."/>
            <person name="Polevoda B."/>
            <person name="Gazquez C."/>
            <person name="Elosegui-Artola A."/>
            <person name="Kim D.S."/>
            <person name="De Juan-Pardo E."/>
            <person name="Demeyer K."/>
            <person name="Hole K."/>
            <person name="Larrea E."/>
            <person name="Timmerman E."/>
            <person name="Prieto J."/>
            <person name="Arnesen T."/>
            <person name="Sherman F."/>
            <person name="Gevaert K."/>
            <person name="Aldabe R."/>
        </authorList>
    </citation>
    <scope>ACETYLATION [LARGE SCALE ANALYSIS] AT ALA-2</scope>
    <scope>CLEAVAGE OF INITIATOR METHIONINE [LARGE SCALE ANALYSIS]</scope>
    <scope>IDENTIFICATION BY MASS SPECTROMETRY [LARGE SCALE ANALYSIS]</scope>
</reference>
<reference key="24">
    <citation type="journal article" date="2013" name="J. Proteome Res.">
        <title>Toward a comprehensive characterization of a human cancer cell phosphoproteome.</title>
        <authorList>
            <person name="Zhou H."/>
            <person name="Di Palma S."/>
            <person name="Preisinger C."/>
            <person name="Peng M."/>
            <person name="Polat A.N."/>
            <person name="Heck A.J."/>
            <person name="Mohammed S."/>
        </authorList>
    </citation>
    <scope>PHOSPHORYLATION [LARGE SCALE ANALYSIS] AT SER-10; SER-215; SER-650; THR-657; SER-769 AND SER-795</scope>
    <scope>IDENTIFICATION BY MASS SPECTROMETRY [LARGE SCALE ANALYSIS]</scope>
    <source>
        <tissue>Cervix carcinoma</tissue>
        <tissue>Erythroleukemia</tissue>
    </source>
</reference>
<reference key="25">
    <citation type="journal article" date="2014" name="J. Biol. Chem.">
        <title>The U4/U6 recycling factor SART3 has histone chaperone activity and associates with USP15 to regulate H2B deubiquitination.</title>
        <authorList>
            <person name="Long L."/>
            <person name="Thelen J.P."/>
            <person name="Furgason M."/>
            <person name="Haj-Yahya M."/>
            <person name="Brik A."/>
            <person name="Cheng D."/>
            <person name="Peng J."/>
            <person name="Yao T."/>
        </authorList>
    </citation>
    <scope>FUNCTION</scope>
    <scope>INTERACTION WITH USP15</scope>
</reference>
<reference key="26">
    <citation type="journal article" date="2014" name="Mol. Cell. Proteomics">
        <title>Immunoaffinity enrichment and mass spectrometry analysis of protein methylation.</title>
        <authorList>
            <person name="Guo A."/>
            <person name="Gu H."/>
            <person name="Zhou J."/>
            <person name="Mulhern D."/>
            <person name="Wang Y."/>
            <person name="Lee K.A."/>
            <person name="Yang V."/>
            <person name="Aguiar M."/>
            <person name="Kornhauser J."/>
            <person name="Jia X."/>
            <person name="Ren J."/>
            <person name="Beausoleil S.A."/>
            <person name="Silva J.C."/>
            <person name="Vemulapalli V."/>
            <person name="Bedford M.T."/>
            <person name="Comb M.J."/>
        </authorList>
    </citation>
    <scope>METHYLATION [LARGE SCALE ANALYSIS] AT ARG-906</scope>
    <scope>IDENTIFICATION BY MASS SPECTROMETRY [LARGE SCALE ANALYSIS]</scope>
    <source>
        <tissue>Colon carcinoma</tissue>
    </source>
</reference>
<reference key="27">
    <citation type="submission" date="2007-04" db="PDB data bank">
        <title>Solution structure of the RNA binding domain of squamous cell carcinoma antigen recognized by T cells 3.</title>
        <authorList>
            <consortium name="RIKEN structural genomics initiative (RSGI)"/>
        </authorList>
    </citation>
    <scope>STRUCTURE BY NMR OF 791-877</scope>
</reference>
<reference key="28">
    <citation type="journal article" date="2005" name="Br. J. Dermatol.">
        <title>A mutation in SART3 gene in a Chinese pedigree with disseminated superficial actinic porokeratosis.</title>
        <authorList>
            <person name="Zhang Z.H."/>
            <person name="Niu Z.M."/>
            <person name="Yuan W.T."/>
            <person name="Zhao J.J."/>
            <person name="Jiang F.X."/>
            <person name="Zhang J."/>
            <person name="Chai B."/>
            <person name="Cui F."/>
            <person name="Chen W."/>
            <person name="Lian C.H."/>
            <person name="Xiang L.H."/>
            <person name="Xu S.J."/>
            <person name="Liu W.D."/>
            <person name="Zheng Z.Z."/>
            <person name="Huang W."/>
        </authorList>
    </citation>
    <scope>VARIANT MET-591</scope>
</reference>
<name>SART3_HUMAN</name>
<evidence type="ECO:0000250" key="1">
    <source>
        <dbReference type="UniProtKB" id="Q9JLI8"/>
    </source>
</evidence>
<evidence type="ECO:0000255" key="2"/>
<evidence type="ECO:0000255" key="3">
    <source>
        <dbReference type="PROSITE-ProRule" id="PRU00176"/>
    </source>
</evidence>
<evidence type="ECO:0000255" key="4">
    <source>
        <dbReference type="PROSITE-ProRule" id="PRU00768"/>
    </source>
</evidence>
<evidence type="ECO:0000256" key="5">
    <source>
        <dbReference type="SAM" id="MobiDB-lite"/>
    </source>
</evidence>
<evidence type="ECO:0000269" key="6">
    <source>
    </source>
</evidence>
<evidence type="ECO:0000269" key="7">
    <source>
    </source>
</evidence>
<evidence type="ECO:0000269" key="8">
    <source>
    </source>
</evidence>
<evidence type="ECO:0000269" key="9">
    <source>
    </source>
</evidence>
<evidence type="ECO:0000269" key="10">
    <source>
    </source>
</evidence>
<evidence type="ECO:0000269" key="11">
    <source>
    </source>
</evidence>
<evidence type="ECO:0000269" key="12">
    <source>
    </source>
</evidence>
<evidence type="ECO:0000269" key="13">
    <source>
    </source>
</evidence>
<evidence type="ECO:0000269" key="14">
    <source>
    </source>
</evidence>
<evidence type="ECO:0000269" key="15">
    <source>
    </source>
</evidence>
<evidence type="ECO:0000269" key="16">
    <source>
    </source>
</evidence>
<evidence type="ECO:0000269" key="17">
    <source>
    </source>
</evidence>
<evidence type="ECO:0000269" key="18">
    <source ref="13"/>
</evidence>
<evidence type="ECO:0000303" key="19">
    <source>
    </source>
</evidence>
<evidence type="ECO:0000303" key="20">
    <source>
    </source>
</evidence>
<evidence type="ECO:0000303" key="21">
    <source>
    </source>
</evidence>
<evidence type="ECO:0000305" key="22"/>
<evidence type="ECO:0000312" key="23">
    <source>
        <dbReference type="EMBL" id="BAA09929.1"/>
    </source>
</evidence>
<evidence type="ECO:0000312" key="24">
    <source>
        <dbReference type="EMBL" id="BAA78384.1"/>
    </source>
</evidence>
<evidence type="ECO:0000312" key="25">
    <source>
        <dbReference type="HGNC" id="HGNC:16860"/>
    </source>
</evidence>
<evidence type="ECO:0007744" key="26">
    <source>
    </source>
</evidence>
<evidence type="ECO:0007744" key="27">
    <source>
    </source>
</evidence>
<evidence type="ECO:0007744" key="28">
    <source>
    </source>
</evidence>
<evidence type="ECO:0007744" key="29">
    <source>
    </source>
</evidence>
<evidence type="ECO:0007744" key="30">
    <source>
    </source>
</evidence>
<evidence type="ECO:0007744" key="31">
    <source>
    </source>
</evidence>
<evidence type="ECO:0007744" key="32">
    <source>
    </source>
</evidence>
<evidence type="ECO:0007744" key="33">
    <source>
    </source>
</evidence>
<evidence type="ECO:0007744" key="34">
    <source>
    </source>
</evidence>
<evidence type="ECO:0007744" key="35">
    <source>
    </source>
</evidence>
<evidence type="ECO:0007829" key="36">
    <source>
        <dbReference type="PDB" id="2DO4"/>
    </source>
</evidence>
<evidence type="ECO:0007829" key="37">
    <source>
        <dbReference type="PDB" id="5CTQ"/>
    </source>
</evidence>
<evidence type="ECO:0007829" key="38">
    <source>
        <dbReference type="PDB" id="5JJW"/>
    </source>
</evidence>
<evidence type="ECO:0007829" key="39">
    <source>
        <dbReference type="PDB" id="5JJX"/>
    </source>
</evidence>
<evidence type="ECO:0007829" key="40">
    <source>
        <dbReference type="PDB" id="7XX8"/>
    </source>
</evidence>
<dbReference type="EMBL" id="AB020880">
    <property type="protein sequence ID" value="BAA78384.1"/>
    <property type="molecule type" value="mRNA"/>
</dbReference>
<dbReference type="EMBL" id="AF387506">
    <property type="protein sequence ID" value="AAK69347.1"/>
    <property type="molecule type" value="mRNA"/>
</dbReference>
<dbReference type="EMBL" id="D63879">
    <property type="protein sequence ID" value="BAA09929.1"/>
    <property type="molecule type" value="mRNA"/>
</dbReference>
<dbReference type="EMBL" id="AK290209">
    <property type="protein sequence ID" value="BAF82898.1"/>
    <property type="molecule type" value="mRNA"/>
</dbReference>
<dbReference type="EMBL" id="AC008119">
    <property type="status" value="NOT_ANNOTATED_CDS"/>
    <property type="molecule type" value="Genomic_DNA"/>
</dbReference>
<dbReference type="EMBL" id="AC010206">
    <property type="status" value="NOT_ANNOTATED_CDS"/>
    <property type="molecule type" value="Genomic_DNA"/>
</dbReference>
<dbReference type="EMBL" id="KF455716">
    <property type="status" value="NOT_ANNOTATED_CDS"/>
    <property type="molecule type" value="Genomic_DNA"/>
</dbReference>
<dbReference type="EMBL" id="KF511170">
    <property type="status" value="NOT_ANNOTATED_CDS"/>
    <property type="molecule type" value="Genomic_DNA"/>
</dbReference>
<dbReference type="EMBL" id="BC032601">
    <property type="protein sequence ID" value="AAH32601.1"/>
    <property type="molecule type" value="mRNA"/>
</dbReference>
<dbReference type="EMBL" id="BC041638">
    <property type="protein sequence ID" value="AAH41638.1"/>
    <property type="molecule type" value="mRNA"/>
</dbReference>
<dbReference type="EMBL" id="BC093784">
    <property type="protein sequence ID" value="AAH93784.1"/>
    <property type="molecule type" value="mRNA"/>
</dbReference>
<dbReference type="EMBL" id="BC103706">
    <property type="protein sequence ID" value="AAI03707.1"/>
    <property type="molecule type" value="mRNA"/>
</dbReference>
<dbReference type="EMBL" id="BC111983">
    <property type="protein sequence ID" value="AAI11984.1"/>
    <property type="molecule type" value="mRNA"/>
</dbReference>
<dbReference type="EMBL" id="BC143253">
    <property type="protein sequence ID" value="AAI43254.1"/>
    <property type="molecule type" value="mRNA"/>
</dbReference>
<dbReference type="CCDS" id="CCDS9117.1">
    <molecule id="Q15020-1"/>
</dbReference>
<dbReference type="RefSeq" id="NP_055521.1">
    <molecule id="Q15020-1"/>
    <property type="nucleotide sequence ID" value="NM_014706.4"/>
</dbReference>
<dbReference type="PDB" id="2DO4">
    <property type="method" value="NMR"/>
    <property type="chains" value="A=791-877"/>
</dbReference>
<dbReference type="PDB" id="5CTQ">
    <property type="method" value="X-ray"/>
    <property type="resolution" value="2.60 A"/>
    <property type="chains" value="A/B/C/D=94-611"/>
</dbReference>
<dbReference type="PDB" id="5CTR">
    <property type="method" value="X-ray"/>
    <property type="resolution" value="3.01 A"/>
    <property type="chains" value="A/B=278-611"/>
</dbReference>
<dbReference type="PDB" id="5CTT">
    <property type="method" value="X-ray"/>
    <property type="resolution" value="1.70 A"/>
    <property type="chains" value="B=601-649"/>
</dbReference>
<dbReference type="PDB" id="5JJW">
    <property type="method" value="X-ray"/>
    <property type="resolution" value="3.01 A"/>
    <property type="chains" value="A=280-578"/>
</dbReference>
<dbReference type="PDB" id="5JJX">
    <property type="method" value="X-ray"/>
    <property type="resolution" value="2.00 A"/>
    <property type="chains" value="A=81-393"/>
</dbReference>
<dbReference type="PDB" id="5JPZ">
    <property type="method" value="X-ray"/>
    <property type="resolution" value="3.04 A"/>
    <property type="chains" value="A/B=96-574"/>
</dbReference>
<dbReference type="PDB" id="7XX8">
    <property type="method" value="NMR"/>
    <property type="chains" value="A=697-786"/>
</dbReference>
<dbReference type="PDB" id="7XX9">
    <property type="method" value="NMR"/>
    <property type="chains" value="A=798-877"/>
</dbReference>
<dbReference type="PDBsum" id="2DO4"/>
<dbReference type="PDBsum" id="5CTQ"/>
<dbReference type="PDBsum" id="5CTR"/>
<dbReference type="PDBsum" id="5CTT"/>
<dbReference type="PDBsum" id="5JJW"/>
<dbReference type="PDBsum" id="5JJX"/>
<dbReference type="PDBsum" id="5JPZ"/>
<dbReference type="PDBsum" id="7XX8"/>
<dbReference type="PDBsum" id="7XX9"/>
<dbReference type="SMR" id="Q15020"/>
<dbReference type="BioGRID" id="115082">
    <property type="interactions" value="544"/>
</dbReference>
<dbReference type="CORUM" id="Q15020"/>
<dbReference type="FunCoup" id="Q15020">
    <property type="interactions" value="4709"/>
</dbReference>
<dbReference type="IntAct" id="Q15020">
    <property type="interactions" value="168"/>
</dbReference>
<dbReference type="MINT" id="Q15020"/>
<dbReference type="STRING" id="9606.ENSP00000449386"/>
<dbReference type="GlyGen" id="Q15020">
    <property type="glycosylation" value="1 site, 1 O-linked glycan (1 site)"/>
</dbReference>
<dbReference type="iPTMnet" id="Q15020"/>
<dbReference type="MetOSite" id="Q15020"/>
<dbReference type="PhosphoSitePlus" id="Q15020"/>
<dbReference type="SwissPalm" id="Q15020"/>
<dbReference type="BioMuta" id="SART3"/>
<dbReference type="DMDM" id="74762140"/>
<dbReference type="jPOST" id="Q15020"/>
<dbReference type="MassIVE" id="Q15020"/>
<dbReference type="PaxDb" id="9606-ENSP00000228284"/>
<dbReference type="PeptideAtlas" id="Q15020"/>
<dbReference type="ProteomicsDB" id="60370">
    <molecule id="Q15020-1"/>
</dbReference>
<dbReference type="ProteomicsDB" id="60371">
    <molecule id="Q15020-2"/>
</dbReference>
<dbReference type="ProteomicsDB" id="60372">
    <molecule id="Q15020-3"/>
</dbReference>
<dbReference type="ProteomicsDB" id="7183"/>
<dbReference type="Pumba" id="Q15020"/>
<dbReference type="Antibodypedia" id="18276">
    <property type="antibodies" value="248 antibodies from 35 providers"/>
</dbReference>
<dbReference type="DNASU" id="9733"/>
<dbReference type="Ensembl" id="ENST00000431469.6">
    <molecule id="Q15020-4"/>
    <property type="protein sequence ID" value="ENSP00000414453.2"/>
    <property type="gene ID" value="ENSG00000075856.12"/>
</dbReference>
<dbReference type="Ensembl" id="ENST00000546611.1">
    <molecule id="Q15020-3"/>
    <property type="protein sequence ID" value="ENSP00000448554.1"/>
    <property type="gene ID" value="ENSG00000075856.12"/>
</dbReference>
<dbReference type="Ensembl" id="ENST00000546728.5">
    <molecule id="Q15020-2"/>
    <property type="protein sequence ID" value="ENSP00000449743.1"/>
    <property type="gene ID" value="ENSG00000075856.12"/>
</dbReference>
<dbReference type="Ensembl" id="ENST00000546815.6">
    <molecule id="Q15020-1"/>
    <property type="protein sequence ID" value="ENSP00000449386.2"/>
    <property type="gene ID" value="ENSG00000075856.12"/>
</dbReference>
<dbReference type="GeneID" id="9733"/>
<dbReference type="KEGG" id="hsa:9733"/>
<dbReference type="MANE-Select" id="ENST00000546815.6">
    <property type="protein sequence ID" value="ENSP00000449386.2"/>
    <property type="RefSeq nucleotide sequence ID" value="NM_014706.4"/>
    <property type="RefSeq protein sequence ID" value="NP_055521.1"/>
</dbReference>
<dbReference type="UCSC" id="uc001tmz.2">
    <molecule id="Q15020-1"/>
    <property type="organism name" value="human"/>
</dbReference>
<dbReference type="AGR" id="HGNC:16860"/>
<dbReference type="CTD" id="9733"/>
<dbReference type="DisGeNET" id="9733"/>
<dbReference type="GeneCards" id="SART3"/>
<dbReference type="HGNC" id="HGNC:16860">
    <property type="gene designation" value="SART3"/>
</dbReference>
<dbReference type="HPA" id="ENSG00000075856">
    <property type="expression patterns" value="Low tissue specificity"/>
</dbReference>
<dbReference type="MalaCards" id="SART3"/>
<dbReference type="MIM" id="611684">
    <property type="type" value="gene"/>
</dbReference>
<dbReference type="neXtProt" id="NX_Q15020"/>
<dbReference type="OpenTargets" id="ENSG00000075856"/>
<dbReference type="PharmGKB" id="PA34948"/>
<dbReference type="VEuPathDB" id="HostDB:ENSG00000075856"/>
<dbReference type="eggNOG" id="KOG0128">
    <property type="taxonomic scope" value="Eukaryota"/>
</dbReference>
<dbReference type="GeneTree" id="ENSGT00900000141107"/>
<dbReference type="HOGENOM" id="CLU_007172_0_0_1"/>
<dbReference type="InParanoid" id="Q15020"/>
<dbReference type="OrthoDB" id="360390at2759"/>
<dbReference type="PAN-GO" id="Q15020">
    <property type="GO annotations" value="4 GO annotations based on evolutionary models"/>
</dbReference>
<dbReference type="PhylomeDB" id="Q15020"/>
<dbReference type="TreeFam" id="TF317554"/>
<dbReference type="PathwayCommons" id="Q15020"/>
<dbReference type="SignaLink" id="Q15020"/>
<dbReference type="BioGRID-ORCS" id="9733">
    <property type="hits" value="802 hits in 1170 CRISPR screens"/>
</dbReference>
<dbReference type="CD-CODE" id="232F8A39">
    <property type="entry name" value="P-body"/>
</dbReference>
<dbReference type="CD-CODE" id="6F24707C">
    <property type="entry name" value="Cajal body"/>
</dbReference>
<dbReference type="CD-CODE" id="804901D1">
    <property type="entry name" value="Nuclear speckle"/>
</dbReference>
<dbReference type="CD-CODE" id="91857CE7">
    <property type="entry name" value="Nucleolus"/>
</dbReference>
<dbReference type="ChiTaRS" id="SART3">
    <property type="organism name" value="human"/>
</dbReference>
<dbReference type="EvolutionaryTrace" id="Q15020"/>
<dbReference type="GeneWiki" id="SART3"/>
<dbReference type="GenomeRNAi" id="9733"/>
<dbReference type="Pharos" id="Q15020">
    <property type="development level" value="Tbio"/>
</dbReference>
<dbReference type="PRO" id="PR:Q15020"/>
<dbReference type="Proteomes" id="UP000005640">
    <property type="component" value="Chromosome 12"/>
</dbReference>
<dbReference type="RNAct" id="Q15020">
    <property type="molecule type" value="protein"/>
</dbReference>
<dbReference type="Bgee" id="ENSG00000075856">
    <property type="expression patterns" value="Expressed in endothelial cell and 213 other cell types or tissues"/>
</dbReference>
<dbReference type="ExpressionAtlas" id="Q15020">
    <property type="expression patterns" value="baseline and differential"/>
</dbReference>
<dbReference type="GO" id="GO:0061574">
    <property type="term" value="C:ASAP complex"/>
    <property type="evidence" value="ECO:0000318"/>
    <property type="project" value="GO_Central"/>
</dbReference>
<dbReference type="GO" id="GO:0015030">
    <property type="term" value="C:Cajal body"/>
    <property type="evidence" value="ECO:0000314"/>
    <property type="project" value="UniProtKB"/>
</dbReference>
<dbReference type="GO" id="GO:0005737">
    <property type="term" value="C:cytoplasm"/>
    <property type="evidence" value="ECO:0000318"/>
    <property type="project" value="GO_Central"/>
</dbReference>
<dbReference type="GO" id="GO:0016607">
    <property type="term" value="C:nuclear speck"/>
    <property type="evidence" value="ECO:0007669"/>
    <property type="project" value="UniProtKB-SubCell"/>
</dbReference>
<dbReference type="GO" id="GO:0005654">
    <property type="term" value="C:nucleoplasm"/>
    <property type="evidence" value="ECO:0000314"/>
    <property type="project" value="HPA"/>
</dbReference>
<dbReference type="GO" id="GO:0005634">
    <property type="term" value="C:nucleus"/>
    <property type="evidence" value="ECO:0000314"/>
    <property type="project" value="UniProtKB"/>
</dbReference>
<dbReference type="GO" id="GO:0042393">
    <property type="term" value="F:histone binding"/>
    <property type="evidence" value="ECO:0000314"/>
    <property type="project" value="UniProtKB"/>
</dbReference>
<dbReference type="GO" id="GO:0030674">
    <property type="term" value="F:protein-macromolecule adaptor activity"/>
    <property type="evidence" value="ECO:0000314"/>
    <property type="project" value="UniProt"/>
</dbReference>
<dbReference type="GO" id="GO:0003723">
    <property type="term" value="F:RNA binding"/>
    <property type="evidence" value="ECO:0007005"/>
    <property type="project" value="UniProtKB"/>
</dbReference>
<dbReference type="GO" id="GO:0030621">
    <property type="term" value="F:U4 snRNA binding"/>
    <property type="evidence" value="ECO:0000314"/>
    <property type="project" value="UniProtKB"/>
</dbReference>
<dbReference type="GO" id="GO:0017070">
    <property type="term" value="F:U6 snRNA binding"/>
    <property type="evidence" value="ECO:0000314"/>
    <property type="project" value="UniProtKB"/>
</dbReference>
<dbReference type="GO" id="GO:0030624">
    <property type="term" value="F:U6atac snRNA binding"/>
    <property type="evidence" value="ECO:0000314"/>
    <property type="project" value="UniProtKB"/>
</dbReference>
<dbReference type="GO" id="GO:1990381">
    <property type="term" value="F:ubiquitin-specific protease binding"/>
    <property type="evidence" value="ECO:0000353"/>
    <property type="project" value="UniProtKB"/>
</dbReference>
<dbReference type="GO" id="GO:0000902">
    <property type="term" value="P:cell morphogenesis"/>
    <property type="evidence" value="ECO:0007669"/>
    <property type="project" value="Ensembl"/>
</dbReference>
<dbReference type="GO" id="GO:0071425">
    <property type="term" value="P:hematopoietic stem cell proliferation"/>
    <property type="evidence" value="ECO:0007669"/>
    <property type="project" value="Ensembl"/>
</dbReference>
<dbReference type="GO" id="GO:0048872">
    <property type="term" value="P:homeostasis of number of cells"/>
    <property type="evidence" value="ECO:0007669"/>
    <property type="project" value="Ensembl"/>
</dbReference>
<dbReference type="GO" id="GO:0000398">
    <property type="term" value="P:mRNA splicing, via spliceosome"/>
    <property type="evidence" value="ECO:0000314"/>
    <property type="project" value="UniProtKB"/>
</dbReference>
<dbReference type="GO" id="GO:0006334">
    <property type="term" value="P:nucleosome assembly"/>
    <property type="evidence" value="ECO:0000314"/>
    <property type="project" value="UniProtKB"/>
</dbReference>
<dbReference type="GO" id="GO:0010468">
    <property type="term" value="P:regulation of gene expression"/>
    <property type="evidence" value="ECO:0000314"/>
    <property type="project" value="MGI"/>
</dbReference>
<dbReference type="GO" id="GO:0051252">
    <property type="term" value="P:regulation of RNA metabolic process"/>
    <property type="evidence" value="ECO:0000314"/>
    <property type="project" value="UniProt"/>
</dbReference>
<dbReference type="GO" id="GO:0000387">
    <property type="term" value="P:spliceosomal snRNP assembly"/>
    <property type="evidence" value="ECO:0000314"/>
    <property type="project" value="UniProtKB"/>
</dbReference>
<dbReference type="GO" id="GO:0000244">
    <property type="term" value="P:spliceosomal tri-snRNP complex assembly"/>
    <property type="evidence" value="ECO:0000314"/>
    <property type="project" value="UniProtKB"/>
</dbReference>
<dbReference type="GO" id="GO:0140673">
    <property type="term" value="P:transcription elongation-coupled chromatin remodeling"/>
    <property type="evidence" value="ECO:0000314"/>
    <property type="project" value="UniProtKB"/>
</dbReference>
<dbReference type="CDD" id="cd12391">
    <property type="entry name" value="RRM1_SART3"/>
    <property type="match status" value="1"/>
</dbReference>
<dbReference type="CDD" id="cd12392">
    <property type="entry name" value="RRM2_SART3"/>
    <property type="match status" value="1"/>
</dbReference>
<dbReference type="FunFam" id="1.25.40.10:FF:000098">
    <property type="entry name" value="Squamous cell carcinoma antigen recognized by T-cells 3"/>
    <property type="match status" value="1"/>
</dbReference>
<dbReference type="FunFam" id="3.30.70.330:FF:000229">
    <property type="entry name" value="Squamous cell carcinoma antigen recognized by T-cells 3"/>
    <property type="match status" value="1"/>
</dbReference>
<dbReference type="FunFam" id="1.25.40.10:FF:000081">
    <property type="entry name" value="squamous cell carcinoma antigen recognized by T-cells 3"/>
    <property type="match status" value="1"/>
</dbReference>
<dbReference type="FunFam" id="3.30.70.330:FF:000271">
    <property type="entry name" value="squamous cell carcinoma antigen recognized by T-cells 3"/>
    <property type="match status" value="1"/>
</dbReference>
<dbReference type="Gene3D" id="3.30.70.330">
    <property type="match status" value="2"/>
</dbReference>
<dbReference type="Gene3D" id="1.25.40.10">
    <property type="entry name" value="Tetratricopeptide repeat domain"/>
    <property type="match status" value="2"/>
</dbReference>
<dbReference type="InterPro" id="IPR003107">
    <property type="entry name" value="HAT"/>
</dbReference>
<dbReference type="InterPro" id="IPR008669">
    <property type="entry name" value="LSM_interact"/>
</dbReference>
<dbReference type="InterPro" id="IPR012677">
    <property type="entry name" value="Nucleotide-bd_a/b_plait_sf"/>
</dbReference>
<dbReference type="InterPro" id="IPR035979">
    <property type="entry name" value="RBD_domain_sf"/>
</dbReference>
<dbReference type="InterPro" id="IPR000504">
    <property type="entry name" value="RRM_dom"/>
</dbReference>
<dbReference type="InterPro" id="IPR034217">
    <property type="entry name" value="SART3_RRM1"/>
</dbReference>
<dbReference type="InterPro" id="IPR034218">
    <property type="entry name" value="SART3_RRM2"/>
</dbReference>
<dbReference type="InterPro" id="IPR011990">
    <property type="entry name" value="TPR-like_helical_dom_sf"/>
</dbReference>
<dbReference type="PANTHER" id="PTHR17204">
    <property type="entry name" value="PRE-MRNA PROCESSING PROTEIN PRP39-RELATED"/>
    <property type="match status" value="1"/>
</dbReference>
<dbReference type="PANTHER" id="PTHR17204:SF25">
    <property type="entry name" value="RRM DOMAIN-CONTAINING PROTEIN"/>
    <property type="match status" value="1"/>
</dbReference>
<dbReference type="Pfam" id="PF23241">
    <property type="entry name" value="HAT_PRP39_C"/>
    <property type="match status" value="1"/>
</dbReference>
<dbReference type="Pfam" id="PF23240">
    <property type="entry name" value="HAT_PRP39_N"/>
    <property type="match status" value="1"/>
</dbReference>
<dbReference type="Pfam" id="PF16605">
    <property type="entry name" value="LSM_int_assoc"/>
    <property type="match status" value="1"/>
</dbReference>
<dbReference type="Pfam" id="PF05391">
    <property type="entry name" value="Lsm_interact"/>
    <property type="match status" value="1"/>
</dbReference>
<dbReference type="Pfam" id="PF00076">
    <property type="entry name" value="RRM_1"/>
    <property type="match status" value="2"/>
</dbReference>
<dbReference type="SMART" id="SM00386">
    <property type="entry name" value="HAT"/>
    <property type="match status" value="7"/>
</dbReference>
<dbReference type="SMART" id="SM00360">
    <property type="entry name" value="RRM"/>
    <property type="match status" value="2"/>
</dbReference>
<dbReference type="SUPFAM" id="SSF54928">
    <property type="entry name" value="RNA-binding domain, RBD"/>
    <property type="match status" value="1"/>
</dbReference>
<dbReference type="SUPFAM" id="SSF48452">
    <property type="entry name" value="TPR-like"/>
    <property type="match status" value="1"/>
</dbReference>
<dbReference type="PROSITE" id="PS50102">
    <property type="entry name" value="RRM"/>
    <property type="match status" value="2"/>
</dbReference>
<gene>
    <name evidence="25" type="primary">SART3</name>
    <name evidence="23" type="synonym">KIAA0156</name>
    <name evidence="19" type="synonym">TIP110</name>
</gene>
<sequence length="963" mass="109935">MATAAETSASEPEAESKAGPKADGEEDEVKAARTRRKVLSRAVAAATYKTMGPAWDQQEEGVSESDGDEYAMASSAESSPGEYEWEYDEEEEKNQLEIERLEEQLSINVYDYNCHVDLIRLLRLEGELTKVRMARQKMSEIFPLTEELWLEWLHDEISMAQDGLDREHVYDLFEKAVKDYICPNIWLEYGQYSVGGIGQKGGLEKVRSVFERALSSVGLHMTKGLALWEAYREFESAIVEAARLEKVHSLFRRQLAIPLYDMEATFAEYEEWSEDPIPESVIQNYNKALQQLEKYKPYEEALLQAEAPRLAEYQAYIDFEMKIGDPARIQLIFERALVENCLVPDLWIRYSQYLDRQLKVKDLVLSVHNRAIRNCPWTVALWSRYLLAMERHGVDHQVISVTFEKALNAGFIQATDYVEIWQAYLDYLRRRVDFKQDSSKELEELRAAFTRALEYLKQEVEERFNESGDPSCVIMQNWARIEARLCNNMQKARELWDSIMTRGNAKYANMWLEYYNLERAHGDTQHCRKALHRAVQCTSDYPEHVCEVLLTMERTEGSLEDWDIAVQKTETRLARVNEQRMKAAEKEAALVQQEEEKAEQRKRARAEKKALKKKKKIRGPEKRGADEDDEKEWGDDEEEQPSKRRRVENSIPAAGETQNVEVAAGPAGKCAAVDVEPPSKQKEKAASLKRDMPKVLHDSSKDSITVFVSNLPYSMQEPDTKLRPLFEACGEVVQIRPIFSNRGDFRGYCYVEFKEEKSALQALEMDRKSVEGRPMFVSPCVDKSKNPDFKVFRYSTSLEKHKLFISGLPFSCTKEELEEICKAHGTVKDLRLVTNRAGKPKGLAYVEYENESQASQAVMKMDGMTIKENIIKVAISNPPQRKVPEKPETRKAPGGPMLLPQTYGARGKGRTQLSLLPRALQRPSAAAPQAENGPAAAPAVAAPAATEAPKMSNADFAKLFLRK</sequence>
<proteinExistence type="evidence at protein level"/>
<accession>Q15020</accession>
<accession>A8K2E4</accession>
<accession>B7ZKM0</accession>
<accession>Q2M2H0</accession>
<accession>Q58F06</accession>
<accession>Q8IUS1</accession>
<accession>Q96J95</accession>
<feature type="initiator methionine" description="Removed" evidence="18 28 29 30 31 32 33">
    <location>
        <position position="1"/>
    </location>
</feature>
<feature type="chain" id="PRO_0000223313" description="Spliceosome associated factor 3, U4/U6 recycling protein">
    <location>
        <begin position="2"/>
        <end position="963"/>
    </location>
</feature>
<feature type="repeat" description="HAT 1">
    <location>
        <begin position="126"/>
        <end position="158"/>
    </location>
</feature>
<feature type="repeat" description="HAT 2">
    <location>
        <begin position="164"/>
        <end position="195"/>
    </location>
</feature>
<feature type="repeat" description="HAT 3">
    <location>
        <begin position="201"/>
        <end position="237"/>
    </location>
</feature>
<feature type="repeat" description="HAT 4">
    <location>
        <begin position="242"/>
        <end position="275"/>
    </location>
</feature>
<feature type="repeat" description="HAT 5">
    <location>
        <begin position="324"/>
        <end position="356"/>
    </location>
</feature>
<feature type="repeat" description="HAT 6">
    <location>
        <begin position="359"/>
        <end position="391"/>
    </location>
</feature>
<feature type="repeat" description="HAT 7">
    <location>
        <begin position="394"/>
        <end position="430"/>
    </location>
</feature>
<feature type="repeat" description="HAT 8">
    <location>
        <begin position="487"/>
        <end position="520"/>
    </location>
</feature>
<feature type="domain" description="RRM 1" evidence="3">
    <location>
        <begin position="704"/>
        <end position="782"/>
    </location>
</feature>
<feature type="domain" description="RRM 2" evidence="3">
    <location>
        <begin position="801"/>
        <end position="878"/>
    </location>
</feature>
<feature type="region of interest" description="Disordered" evidence="5">
    <location>
        <begin position="1"/>
        <end position="36"/>
    </location>
</feature>
<feature type="region of interest" description="Mediates interaction with PRPF3" evidence="12">
    <location>
        <begin position="2"/>
        <end position="351"/>
    </location>
</feature>
<feature type="region of interest" description="Disordered" evidence="5">
    <location>
        <begin position="50"/>
        <end position="90"/>
    </location>
</feature>
<feature type="region of interest" description="Required for interaction with USP4" evidence="16">
    <location>
        <begin position="487"/>
        <end position="520"/>
    </location>
</feature>
<feature type="region of interest" description="Necessary and sufficient for U6 snRNA binding" evidence="12">
    <location>
        <begin position="537"/>
        <end position="953"/>
    </location>
</feature>
<feature type="region of interest" description="Disordered" evidence="5">
    <location>
        <begin position="590"/>
        <end position="694"/>
    </location>
</feature>
<feature type="region of interest" description="Required for nuclear localization" evidence="7">
    <location>
        <begin position="600"/>
        <end position="670"/>
    </location>
</feature>
<feature type="region of interest" description="Disordered" evidence="5">
    <location>
        <begin position="878"/>
        <end position="898"/>
    </location>
</feature>
<feature type="region of interest" description="Disordered" evidence="5">
    <location>
        <begin position="920"/>
        <end position="948"/>
    </location>
</feature>
<feature type="coiled-coil region" evidence="2">
    <location>
        <begin position="21"/>
        <end position="46"/>
    </location>
</feature>
<feature type="coiled-coil region" evidence="2">
    <location>
        <begin position="82"/>
        <end position="110"/>
    </location>
</feature>
<feature type="coiled-coil region" evidence="2">
    <location>
        <begin position="559"/>
        <end position="619"/>
    </location>
</feature>
<feature type="short sequence motif" description="Nuclear localization signal" evidence="4">
    <location>
        <begin position="601"/>
        <end position="608"/>
    </location>
</feature>
<feature type="compositionally biased region" description="Low complexity" evidence="5">
    <location>
        <begin position="1"/>
        <end position="11"/>
    </location>
</feature>
<feature type="compositionally biased region" description="Basic and acidic residues" evidence="5">
    <location>
        <begin position="14"/>
        <end position="23"/>
    </location>
</feature>
<feature type="compositionally biased region" description="Acidic residues" evidence="5">
    <location>
        <begin position="57"/>
        <end position="69"/>
    </location>
</feature>
<feature type="compositionally biased region" description="Basic and acidic residues" evidence="5">
    <location>
        <begin position="590"/>
        <end position="601"/>
    </location>
</feature>
<feature type="compositionally biased region" description="Basic residues" evidence="5">
    <location>
        <begin position="602"/>
        <end position="617"/>
    </location>
</feature>
<feature type="compositionally biased region" description="Acidic residues" evidence="5">
    <location>
        <begin position="626"/>
        <end position="639"/>
    </location>
</feature>
<feature type="compositionally biased region" description="Basic and acidic residues" evidence="5">
    <location>
        <begin position="677"/>
        <end position="694"/>
    </location>
</feature>
<feature type="compositionally biased region" description="Basic and acidic residues" evidence="5">
    <location>
        <begin position="882"/>
        <end position="891"/>
    </location>
</feature>
<feature type="compositionally biased region" description="Low complexity" evidence="5">
    <location>
        <begin position="925"/>
        <end position="948"/>
    </location>
</feature>
<feature type="modified residue" description="N-acetylalanine" evidence="18 28 29 30 31 32 33">
    <location>
        <position position="2"/>
    </location>
</feature>
<feature type="modified residue" description="Phosphoserine" evidence="31 34">
    <location>
        <position position="10"/>
    </location>
</feature>
<feature type="modified residue" description="Phosphoserine" evidence="26">
    <location>
        <position position="16"/>
    </location>
</feature>
<feature type="modified residue" description="Phosphoserine" evidence="34">
    <location>
        <position position="215"/>
    </location>
</feature>
<feature type="modified residue" description="Phosphoserine" evidence="34">
    <location>
        <position position="650"/>
    </location>
</feature>
<feature type="modified residue" description="Phosphothreonine" evidence="34">
    <location>
        <position position="657"/>
    </location>
</feature>
<feature type="modified residue" description="Phosphoserine" evidence="34">
    <location>
        <position position="769"/>
    </location>
</feature>
<feature type="modified residue" description="Phosphoserine" evidence="34">
    <location>
        <position position="795"/>
    </location>
</feature>
<feature type="modified residue" description="Phosphoserine" evidence="27">
    <location>
        <position position="852"/>
    </location>
</feature>
<feature type="modified residue" description="Omega-N-methylarginine" evidence="35">
    <location>
        <position position="906"/>
    </location>
</feature>
<feature type="splice variant" id="VSP_017248" description="In isoform 3." evidence="21">
    <original>LSINVYDYNCHVDLIRLLRLEGELT</original>
    <variation>VGPGVGSGHLPVFQVLGSPCPGPPP</variation>
    <location>
        <begin position="105"/>
        <end position="129"/>
    </location>
</feature>
<feature type="splice variant" id="VSP_017249" description="In isoform 3." evidence="21">
    <location>
        <begin position="130"/>
        <end position="963"/>
    </location>
</feature>
<feature type="splice variant" id="VSP_017250" description="In isoform 2." evidence="19">
    <original>SQYLDRQLKVKDLV</original>
    <variation>RSTTESKGFGFICT</variation>
    <location>
        <begin position="351"/>
        <end position="364"/>
    </location>
</feature>
<feature type="splice variant" id="VSP_017251" description="In isoform 2." evidence="19">
    <location>
        <begin position="365"/>
        <end position="963"/>
    </location>
</feature>
<feature type="splice variant" id="VSP_057284" description="In isoform 4." evidence="21">
    <location>
        <begin position="401"/>
        <end position="436"/>
    </location>
</feature>
<feature type="sequence variant" id="VAR_038802" description="In dbSNP:rs2072579." evidence="10">
    <original>D</original>
    <variation>E</variation>
    <location>
        <position position="23"/>
    </location>
</feature>
<feature type="sequence variant" id="VAR_038683" description="Found in a patient with disseminated superficial actinic porokeratosis; uncertain significance; dbSNP:rs118203954." evidence="13">
    <original>V</original>
    <variation>M</variation>
    <location>
        <position position="591"/>
    </location>
</feature>
<feature type="sequence variant" id="VAR_038684" description="In dbSNP:rs2287546.">
    <original>E</original>
    <variation>D</variation>
    <location>
        <position position="621"/>
    </location>
</feature>
<feature type="helix" evidence="39">
    <location>
        <begin position="91"/>
        <end position="107"/>
    </location>
</feature>
<feature type="helix" evidence="39">
    <location>
        <begin position="112"/>
        <end position="124"/>
    </location>
</feature>
<feature type="helix" evidence="39">
    <location>
        <begin position="128"/>
        <end position="141"/>
    </location>
</feature>
<feature type="helix" evidence="39">
    <location>
        <begin position="146"/>
        <end position="159"/>
    </location>
</feature>
<feature type="helix" evidence="39">
    <location>
        <begin position="163"/>
        <end position="176"/>
    </location>
</feature>
<feature type="helix" evidence="39">
    <location>
        <begin position="183"/>
        <end position="195"/>
    </location>
</feature>
<feature type="turn" evidence="39">
    <location>
        <begin position="196"/>
        <end position="198"/>
    </location>
</feature>
<feature type="helix" evidence="39">
    <location>
        <begin position="202"/>
        <end position="217"/>
    </location>
</feature>
<feature type="turn" evidence="39">
    <location>
        <begin position="221"/>
        <end position="223"/>
    </location>
</feature>
<feature type="helix" evidence="39">
    <location>
        <begin position="225"/>
        <end position="236"/>
    </location>
</feature>
<feature type="strand" evidence="37">
    <location>
        <begin position="240"/>
        <end position="242"/>
    </location>
</feature>
<feature type="helix" evidence="39">
    <location>
        <begin position="245"/>
        <end position="255"/>
    </location>
</feature>
<feature type="helix" evidence="39">
    <location>
        <begin position="262"/>
        <end position="272"/>
    </location>
</feature>
<feature type="helix" evidence="39">
    <location>
        <begin position="279"/>
        <end position="304"/>
    </location>
</feature>
<feature type="helix" evidence="39">
    <location>
        <begin position="310"/>
        <end position="323"/>
    </location>
</feature>
<feature type="helix" evidence="39">
    <location>
        <begin position="326"/>
        <end position="339"/>
    </location>
</feature>
<feature type="helix" evidence="39">
    <location>
        <begin position="344"/>
        <end position="354"/>
    </location>
</feature>
<feature type="helix" evidence="39">
    <location>
        <begin position="361"/>
        <end position="374"/>
    </location>
</feature>
<feature type="helix" evidence="39">
    <location>
        <begin position="379"/>
        <end position="392"/>
    </location>
</feature>
<feature type="helix" evidence="37">
    <location>
        <begin position="396"/>
        <end position="409"/>
    </location>
</feature>
<feature type="helix" evidence="37">
    <location>
        <begin position="414"/>
        <end position="429"/>
    </location>
</feature>
<feature type="strand" evidence="38">
    <location>
        <begin position="436"/>
        <end position="438"/>
    </location>
</feature>
<feature type="helix" evidence="37">
    <location>
        <begin position="440"/>
        <end position="457"/>
    </location>
</feature>
<feature type="helix" evidence="37">
    <location>
        <begin position="459"/>
        <end position="464"/>
    </location>
</feature>
<feature type="helix" evidence="37">
    <location>
        <begin position="473"/>
        <end position="484"/>
    </location>
</feature>
<feature type="helix" evidence="37">
    <location>
        <begin position="489"/>
        <end position="501"/>
    </location>
</feature>
<feature type="turn" evidence="37">
    <location>
        <begin position="502"/>
        <end position="506"/>
    </location>
</feature>
<feature type="helix" evidence="37">
    <location>
        <begin position="508"/>
        <end position="521"/>
    </location>
</feature>
<feature type="helix" evidence="37">
    <location>
        <begin position="524"/>
        <end position="537"/>
    </location>
</feature>
<feature type="helix" evidence="37">
    <location>
        <begin position="542"/>
        <end position="556"/>
    </location>
</feature>
<feature type="helix" evidence="37">
    <location>
        <begin position="559"/>
        <end position="603"/>
    </location>
</feature>
<feature type="helix" evidence="40">
    <location>
        <begin position="699"/>
        <end position="704"/>
    </location>
</feature>
<feature type="strand" evidence="40">
    <location>
        <begin position="705"/>
        <end position="709"/>
    </location>
</feature>
<feature type="strand" evidence="40">
    <location>
        <begin position="713"/>
        <end position="716"/>
    </location>
</feature>
<feature type="helix" evidence="40">
    <location>
        <begin position="718"/>
        <end position="721"/>
    </location>
</feature>
<feature type="helix" evidence="40">
    <location>
        <begin position="723"/>
        <end position="726"/>
    </location>
</feature>
<feature type="turn" evidence="40">
    <location>
        <begin position="727"/>
        <end position="729"/>
    </location>
</feature>
<feature type="strand" evidence="40">
    <location>
        <begin position="732"/>
        <end position="735"/>
    </location>
</feature>
<feature type="strand" evidence="40">
    <location>
        <begin position="742"/>
        <end position="744"/>
    </location>
</feature>
<feature type="strand" evidence="40">
    <location>
        <begin position="747"/>
        <end position="755"/>
    </location>
</feature>
<feature type="helix" evidence="40">
    <location>
        <begin position="756"/>
        <end position="762"/>
    </location>
</feature>
<feature type="helix" evidence="40">
    <location>
        <begin position="763"/>
        <end position="765"/>
    </location>
</feature>
<feature type="strand" evidence="40">
    <location>
        <begin position="776"/>
        <end position="781"/>
    </location>
</feature>
<feature type="strand" evidence="36">
    <location>
        <begin position="803"/>
        <end position="807"/>
    </location>
</feature>
<feature type="helix" evidence="36">
    <location>
        <begin position="814"/>
        <end position="821"/>
    </location>
</feature>
<feature type="turn" evidence="36">
    <location>
        <begin position="822"/>
        <end position="824"/>
    </location>
</feature>
<feature type="strand" evidence="36">
    <location>
        <begin position="827"/>
        <end position="834"/>
    </location>
</feature>
<feature type="strand" evidence="36">
    <location>
        <begin position="840"/>
        <end position="850"/>
    </location>
</feature>
<feature type="helix" evidence="36">
    <location>
        <begin position="851"/>
        <end position="861"/>
    </location>
</feature>
<feature type="strand" evidence="36">
    <location>
        <begin position="864"/>
        <end position="868"/>
    </location>
</feature>
<feature type="strand" evidence="36">
    <location>
        <begin position="870"/>
        <end position="875"/>
    </location>
</feature>